<sequence length="607" mass="67719">MNLQEMNARKEKIRNFSIIAHIDHGKSTLADRILEQTETVSKREMQAQLLDSMDLERERGITIKLNAIELNYKAKDGETYIFHLIDTPGHVDFTYEVSRSLAACEGAILVVDAAQGIEAQTLANVYLALDNDLEILPVINKIDLPAADPEMVRQEIEDVIGLDASEAILASAKAGIGIEEILEQIVEKVPAPQGEVDAPLKALIFDSVYDAYRGVILQIRVIDGSLKVGDRIQLMSNGKEFDVTEVGIFTPKAVSRDFLMAGDVGYVAASIKTVADTRVGDTVTLASNPATEALKGYKEMNPMVFAGIYPIESNKFNDLREALEKLQLNDASLRFEPETSQALGFGFRCGFLGLLHMDVIQERLEREFGIDLIMTAPSVVYHINTTDGETLEVANPSEFPDPTRIENIEEPFVKAQIMVPNDFVGPVMELAQRKRGIFLTMDYLDANRVNIIYNIPLSEIVFDFFDKLKSSTKGYASFDYEISDYRPSNLVKMDILLNAEKVDALSFIVHKDFAFERGKVIVEKLKKLIPRQQFEVPIQATIGNKIVARSDIKALRKNVLAKCYGGDISRKRKLLEKQKAGKKRMKAIGSVEVPQEAFLSVLSMDEE</sequence>
<reference key="1">
    <citation type="journal article" date="2001" name="Genome Res.">
        <title>The complete genome sequence of the lactic acid bacterium Lactococcus lactis ssp. lactis IL1403.</title>
        <authorList>
            <person name="Bolotin A."/>
            <person name="Wincker P."/>
            <person name="Mauger S."/>
            <person name="Jaillon O."/>
            <person name="Malarme K."/>
            <person name="Weissenbach J."/>
            <person name="Ehrlich S.D."/>
            <person name="Sorokin A."/>
        </authorList>
    </citation>
    <scope>NUCLEOTIDE SEQUENCE [LARGE SCALE GENOMIC DNA]</scope>
    <source>
        <strain>IL1403</strain>
    </source>
</reference>
<organism>
    <name type="scientific">Lactococcus lactis subsp. lactis (strain IL1403)</name>
    <name type="common">Streptococcus lactis</name>
    <dbReference type="NCBI Taxonomy" id="272623"/>
    <lineage>
        <taxon>Bacteria</taxon>
        <taxon>Bacillati</taxon>
        <taxon>Bacillota</taxon>
        <taxon>Bacilli</taxon>
        <taxon>Lactobacillales</taxon>
        <taxon>Streptococcaceae</taxon>
        <taxon>Lactococcus</taxon>
    </lineage>
</organism>
<gene>
    <name evidence="1" type="primary">lepA</name>
    <name type="ordered locus">LL1108</name>
    <name type="ORF">L0159</name>
</gene>
<dbReference type="EC" id="3.6.5.n1" evidence="1"/>
<dbReference type="EMBL" id="AE005176">
    <property type="protein sequence ID" value="AAK05206.1"/>
    <property type="molecule type" value="Genomic_DNA"/>
</dbReference>
<dbReference type="PIR" id="D86763">
    <property type="entry name" value="D86763"/>
</dbReference>
<dbReference type="RefSeq" id="NP_267264.1">
    <property type="nucleotide sequence ID" value="NC_002662.1"/>
</dbReference>
<dbReference type="RefSeq" id="WP_003132048.1">
    <property type="nucleotide sequence ID" value="NC_002662.1"/>
</dbReference>
<dbReference type="SMR" id="Q9CGI8"/>
<dbReference type="PaxDb" id="272623-L0159"/>
<dbReference type="EnsemblBacteria" id="AAK05206">
    <property type="protein sequence ID" value="AAK05206"/>
    <property type="gene ID" value="L0159"/>
</dbReference>
<dbReference type="KEGG" id="lla:L0159"/>
<dbReference type="PATRIC" id="fig|272623.7.peg.1186"/>
<dbReference type="eggNOG" id="COG0481">
    <property type="taxonomic scope" value="Bacteria"/>
</dbReference>
<dbReference type="HOGENOM" id="CLU_009995_3_3_9"/>
<dbReference type="OrthoDB" id="9801591at2"/>
<dbReference type="Proteomes" id="UP000002196">
    <property type="component" value="Chromosome"/>
</dbReference>
<dbReference type="GO" id="GO:0005886">
    <property type="term" value="C:plasma membrane"/>
    <property type="evidence" value="ECO:0007669"/>
    <property type="project" value="UniProtKB-SubCell"/>
</dbReference>
<dbReference type="GO" id="GO:0005525">
    <property type="term" value="F:GTP binding"/>
    <property type="evidence" value="ECO:0007669"/>
    <property type="project" value="UniProtKB-UniRule"/>
</dbReference>
<dbReference type="GO" id="GO:0003924">
    <property type="term" value="F:GTPase activity"/>
    <property type="evidence" value="ECO:0007669"/>
    <property type="project" value="UniProtKB-UniRule"/>
</dbReference>
<dbReference type="GO" id="GO:0043022">
    <property type="term" value="F:ribosome binding"/>
    <property type="evidence" value="ECO:0007669"/>
    <property type="project" value="UniProtKB-UniRule"/>
</dbReference>
<dbReference type="GO" id="GO:0003746">
    <property type="term" value="F:translation elongation factor activity"/>
    <property type="evidence" value="ECO:0007669"/>
    <property type="project" value="UniProtKB-UniRule"/>
</dbReference>
<dbReference type="GO" id="GO:0045727">
    <property type="term" value="P:positive regulation of translation"/>
    <property type="evidence" value="ECO:0007669"/>
    <property type="project" value="UniProtKB-UniRule"/>
</dbReference>
<dbReference type="CDD" id="cd03699">
    <property type="entry name" value="EF4_II"/>
    <property type="match status" value="1"/>
</dbReference>
<dbReference type="CDD" id="cd16260">
    <property type="entry name" value="EF4_III"/>
    <property type="match status" value="1"/>
</dbReference>
<dbReference type="CDD" id="cd01890">
    <property type="entry name" value="LepA"/>
    <property type="match status" value="1"/>
</dbReference>
<dbReference type="CDD" id="cd03709">
    <property type="entry name" value="lepA_C"/>
    <property type="match status" value="1"/>
</dbReference>
<dbReference type="FunFam" id="3.40.50.300:FF:000078">
    <property type="entry name" value="Elongation factor 4"/>
    <property type="match status" value="1"/>
</dbReference>
<dbReference type="FunFam" id="2.40.30.10:FF:000015">
    <property type="entry name" value="Translation factor GUF1, mitochondrial"/>
    <property type="match status" value="1"/>
</dbReference>
<dbReference type="FunFam" id="3.30.70.240:FF:000007">
    <property type="entry name" value="Translation factor GUF1, mitochondrial"/>
    <property type="match status" value="1"/>
</dbReference>
<dbReference type="FunFam" id="3.30.70.2570:FF:000001">
    <property type="entry name" value="Translation factor GUF1, mitochondrial"/>
    <property type="match status" value="1"/>
</dbReference>
<dbReference type="FunFam" id="3.30.70.870:FF:000004">
    <property type="entry name" value="Translation factor GUF1, mitochondrial"/>
    <property type="match status" value="1"/>
</dbReference>
<dbReference type="Gene3D" id="3.30.70.240">
    <property type="match status" value="1"/>
</dbReference>
<dbReference type="Gene3D" id="3.30.70.2570">
    <property type="entry name" value="Elongation factor 4, C-terminal domain"/>
    <property type="match status" value="1"/>
</dbReference>
<dbReference type="Gene3D" id="3.30.70.870">
    <property type="entry name" value="Elongation Factor G (Translational Gtpase), domain 3"/>
    <property type="match status" value="1"/>
</dbReference>
<dbReference type="Gene3D" id="3.40.50.300">
    <property type="entry name" value="P-loop containing nucleotide triphosphate hydrolases"/>
    <property type="match status" value="1"/>
</dbReference>
<dbReference type="Gene3D" id="2.40.30.10">
    <property type="entry name" value="Translation factors"/>
    <property type="match status" value="1"/>
</dbReference>
<dbReference type="HAMAP" id="MF_00071">
    <property type="entry name" value="LepA"/>
    <property type="match status" value="1"/>
</dbReference>
<dbReference type="InterPro" id="IPR006297">
    <property type="entry name" value="EF-4"/>
</dbReference>
<dbReference type="InterPro" id="IPR041095">
    <property type="entry name" value="EFG_II"/>
</dbReference>
<dbReference type="InterPro" id="IPR035647">
    <property type="entry name" value="EFG_III/V"/>
</dbReference>
<dbReference type="InterPro" id="IPR000640">
    <property type="entry name" value="EFG_V-like"/>
</dbReference>
<dbReference type="InterPro" id="IPR004161">
    <property type="entry name" value="EFTu-like_2"/>
</dbReference>
<dbReference type="InterPro" id="IPR031157">
    <property type="entry name" value="G_TR_CS"/>
</dbReference>
<dbReference type="InterPro" id="IPR038363">
    <property type="entry name" value="LepA_C_sf"/>
</dbReference>
<dbReference type="InterPro" id="IPR013842">
    <property type="entry name" value="LepA_CTD"/>
</dbReference>
<dbReference type="InterPro" id="IPR035654">
    <property type="entry name" value="LepA_IV"/>
</dbReference>
<dbReference type="InterPro" id="IPR027417">
    <property type="entry name" value="P-loop_NTPase"/>
</dbReference>
<dbReference type="InterPro" id="IPR005225">
    <property type="entry name" value="Small_GTP-bd"/>
</dbReference>
<dbReference type="InterPro" id="IPR000795">
    <property type="entry name" value="T_Tr_GTP-bd_dom"/>
</dbReference>
<dbReference type="InterPro" id="IPR009000">
    <property type="entry name" value="Transl_B-barrel_sf"/>
</dbReference>
<dbReference type="NCBIfam" id="TIGR01393">
    <property type="entry name" value="lepA"/>
    <property type="match status" value="1"/>
</dbReference>
<dbReference type="NCBIfam" id="TIGR00231">
    <property type="entry name" value="small_GTP"/>
    <property type="match status" value="1"/>
</dbReference>
<dbReference type="PANTHER" id="PTHR43512:SF4">
    <property type="entry name" value="TRANSLATION FACTOR GUF1 HOMOLOG, CHLOROPLASTIC"/>
    <property type="match status" value="1"/>
</dbReference>
<dbReference type="PANTHER" id="PTHR43512">
    <property type="entry name" value="TRANSLATION FACTOR GUF1-RELATED"/>
    <property type="match status" value="1"/>
</dbReference>
<dbReference type="Pfam" id="PF00679">
    <property type="entry name" value="EFG_C"/>
    <property type="match status" value="1"/>
</dbReference>
<dbReference type="Pfam" id="PF14492">
    <property type="entry name" value="EFG_III"/>
    <property type="match status" value="1"/>
</dbReference>
<dbReference type="Pfam" id="PF00009">
    <property type="entry name" value="GTP_EFTU"/>
    <property type="match status" value="1"/>
</dbReference>
<dbReference type="Pfam" id="PF03144">
    <property type="entry name" value="GTP_EFTU_D2"/>
    <property type="match status" value="1"/>
</dbReference>
<dbReference type="Pfam" id="PF06421">
    <property type="entry name" value="LepA_C"/>
    <property type="match status" value="1"/>
</dbReference>
<dbReference type="PRINTS" id="PR00315">
    <property type="entry name" value="ELONGATNFCT"/>
</dbReference>
<dbReference type="SMART" id="SM00838">
    <property type="entry name" value="EFG_C"/>
    <property type="match status" value="1"/>
</dbReference>
<dbReference type="SUPFAM" id="SSF54980">
    <property type="entry name" value="EF-G C-terminal domain-like"/>
    <property type="match status" value="2"/>
</dbReference>
<dbReference type="SUPFAM" id="SSF52540">
    <property type="entry name" value="P-loop containing nucleoside triphosphate hydrolases"/>
    <property type="match status" value="1"/>
</dbReference>
<dbReference type="SUPFAM" id="SSF50447">
    <property type="entry name" value="Translation proteins"/>
    <property type="match status" value="1"/>
</dbReference>
<dbReference type="PROSITE" id="PS00301">
    <property type="entry name" value="G_TR_1"/>
    <property type="match status" value="1"/>
</dbReference>
<dbReference type="PROSITE" id="PS51722">
    <property type="entry name" value="G_TR_2"/>
    <property type="match status" value="1"/>
</dbReference>
<keyword id="KW-1003">Cell membrane</keyword>
<keyword id="KW-0342">GTP-binding</keyword>
<keyword id="KW-0378">Hydrolase</keyword>
<keyword id="KW-0472">Membrane</keyword>
<keyword id="KW-0547">Nucleotide-binding</keyword>
<keyword id="KW-0648">Protein biosynthesis</keyword>
<keyword id="KW-1185">Reference proteome</keyword>
<comment type="function">
    <text evidence="1">Required for accurate and efficient protein synthesis under certain stress conditions. May act as a fidelity factor of the translation reaction, by catalyzing a one-codon backward translocation of tRNAs on improperly translocated ribosomes. Back-translocation proceeds from a post-translocation (POST) complex to a pre-translocation (PRE) complex, thus giving elongation factor G a second chance to translocate the tRNAs correctly. Binds to ribosomes in a GTP-dependent manner.</text>
</comment>
<comment type="catalytic activity">
    <reaction evidence="1">
        <text>GTP + H2O = GDP + phosphate + H(+)</text>
        <dbReference type="Rhea" id="RHEA:19669"/>
        <dbReference type="ChEBI" id="CHEBI:15377"/>
        <dbReference type="ChEBI" id="CHEBI:15378"/>
        <dbReference type="ChEBI" id="CHEBI:37565"/>
        <dbReference type="ChEBI" id="CHEBI:43474"/>
        <dbReference type="ChEBI" id="CHEBI:58189"/>
        <dbReference type="EC" id="3.6.5.n1"/>
    </reaction>
</comment>
<comment type="subcellular location">
    <subcellularLocation>
        <location evidence="1">Cell membrane</location>
        <topology evidence="1">Peripheral membrane protein</topology>
        <orientation evidence="1">Cytoplasmic side</orientation>
    </subcellularLocation>
</comment>
<comment type="similarity">
    <text evidence="1">Belongs to the TRAFAC class translation factor GTPase superfamily. Classic translation factor GTPase family. LepA subfamily.</text>
</comment>
<name>LEPA_LACLA</name>
<accession>Q9CGI8</accession>
<feature type="chain" id="PRO_0000176285" description="Elongation factor 4">
    <location>
        <begin position="1"/>
        <end position="607"/>
    </location>
</feature>
<feature type="domain" description="tr-type G">
    <location>
        <begin position="11"/>
        <end position="193"/>
    </location>
</feature>
<feature type="binding site" evidence="1">
    <location>
        <begin position="23"/>
        <end position="28"/>
    </location>
    <ligand>
        <name>GTP</name>
        <dbReference type="ChEBI" id="CHEBI:37565"/>
    </ligand>
</feature>
<feature type="binding site" evidence="1">
    <location>
        <begin position="140"/>
        <end position="143"/>
    </location>
    <ligand>
        <name>GTP</name>
        <dbReference type="ChEBI" id="CHEBI:37565"/>
    </ligand>
</feature>
<evidence type="ECO:0000255" key="1">
    <source>
        <dbReference type="HAMAP-Rule" id="MF_00071"/>
    </source>
</evidence>
<protein>
    <recommendedName>
        <fullName evidence="1">Elongation factor 4</fullName>
        <shortName evidence="1">EF-4</shortName>
        <ecNumber evidence="1">3.6.5.n1</ecNumber>
    </recommendedName>
    <alternativeName>
        <fullName evidence="1">Ribosomal back-translocase LepA</fullName>
    </alternativeName>
</protein>
<proteinExistence type="inferred from homology"/>